<dbReference type="EMBL" id="CR858403">
    <property type="protein sequence ID" value="CAH90630.1"/>
    <property type="molecule type" value="mRNA"/>
</dbReference>
<dbReference type="EMBL" id="CR860417">
    <property type="protein sequence ID" value="CAH92542.1"/>
    <property type="molecule type" value="mRNA"/>
</dbReference>
<dbReference type="RefSeq" id="NP_001125341.1">
    <property type="nucleotide sequence ID" value="NM_001131869.1"/>
</dbReference>
<dbReference type="FunCoup" id="Q5R6R8">
    <property type="interactions" value="23"/>
</dbReference>
<dbReference type="GeneID" id="100172243"/>
<dbReference type="KEGG" id="pon:100172243"/>
<dbReference type="CTD" id="55228"/>
<dbReference type="InParanoid" id="Q5R6R8"/>
<dbReference type="OrthoDB" id="115435at2759"/>
<dbReference type="Proteomes" id="UP000001595">
    <property type="component" value="Unplaced"/>
</dbReference>
<dbReference type="InterPro" id="IPR049131">
    <property type="entry name" value="PNM8A_C"/>
</dbReference>
<dbReference type="InterPro" id="IPR026523">
    <property type="entry name" value="PNMA"/>
</dbReference>
<dbReference type="InterPro" id="IPR048271">
    <property type="entry name" value="PNMA_N"/>
</dbReference>
<dbReference type="PANTHER" id="PTHR23095">
    <property type="entry name" value="PARANEOPLASTIC ANTIGEN"/>
    <property type="match status" value="1"/>
</dbReference>
<dbReference type="PANTHER" id="PTHR23095:SF21">
    <property type="entry name" value="PARANEOPLASTIC ANTIGEN-LIKE PROTEIN 8A"/>
    <property type="match status" value="1"/>
</dbReference>
<dbReference type="Pfam" id="PF20847">
    <property type="entry name" value="PNM8A"/>
    <property type="match status" value="1"/>
</dbReference>
<dbReference type="Pfam" id="PF20846">
    <property type="entry name" value="PNMA_N"/>
    <property type="match status" value="1"/>
</dbReference>
<evidence type="ECO:0000256" key="1">
    <source>
        <dbReference type="SAM" id="MobiDB-lite"/>
    </source>
</evidence>
<evidence type="ECO:0000305" key="2"/>
<gene>
    <name type="primary">PNMA8A</name>
    <name type="synonym">PNMAL1</name>
</gene>
<reference key="1">
    <citation type="submission" date="2004-11" db="EMBL/GenBank/DDBJ databases">
        <authorList>
            <consortium name="The German cDNA consortium"/>
        </authorList>
    </citation>
    <scope>NUCLEOTIDE SEQUENCE [LARGE SCALE MRNA]</scope>
    <source>
        <tissue>Brain cortex</tissue>
    </source>
</reference>
<comment type="similarity">
    <text evidence="2">Belongs to the PNMA family.</text>
</comment>
<sequence length="439" mass="48056">MSKTMAMNLLEDWCRGMEVDIHRSLLVTGIPEDCGQAEIEETLNGVLAPLGPYRVLNKIFVREENVKAALIEVGEGVNLSTIPREFPGRGGVWRVVCRDPTQDAEFLKNLNEFLDAEGRTWEDVVRLLQLNHPTLSQNQHQPPENWAEALGVLLGAVVQIIFCMDAEIRSREEARAQEAAEFEEMAAWALAAGKKVKKEPGLAAEVGSALKAETPNNWNATEDQHDPPKPLVRRAGAKSRSRRKKQKKNPKQEAVPWKKPKGINSSSTANLEDPEVGDAESMAISEPIKGSRKPCVKQEELALKKPMAKCAWKGPREPPQDAQAEAESPGGASESDQDGGHESPPKKKAMAWVSAKNPAPMRKKKKVSLGPVSYVLVDSEDGRKKPVMPKKGPGSRREASVQKAPQGQQPAEATASTSRGPRAKPEGSPRRATNESRKV</sequence>
<proteinExistence type="evidence at transcript level"/>
<name>PNM8A_PONAB</name>
<keyword id="KW-1185">Reference proteome</keyword>
<organism>
    <name type="scientific">Pongo abelii</name>
    <name type="common">Sumatran orangutan</name>
    <name type="synonym">Pongo pygmaeus abelii</name>
    <dbReference type="NCBI Taxonomy" id="9601"/>
    <lineage>
        <taxon>Eukaryota</taxon>
        <taxon>Metazoa</taxon>
        <taxon>Chordata</taxon>
        <taxon>Craniata</taxon>
        <taxon>Vertebrata</taxon>
        <taxon>Euteleostomi</taxon>
        <taxon>Mammalia</taxon>
        <taxon>Eutheria</taxon>
        <taxon>Euarchontoglires</taxon>
        <taxon>Primates</taxon>
        <taxon>Haplorrhini</taxon>
        <taxon>Catarrhini</taxon>
        <taxon>Hominidae</taxon>
        <taxon>Pongo</taxon>
    </lineage>
</organism>
<protein>
    <recommendedName>
        <fullName>Paraneoplastic antigen-like protein 8A</fullName>
    </recommendedName>
    <alternativeName>
        <fullName>PNMA-like protein 1</fullName>
    </alternativeName>
</protein>
<accession>Q5R6R8</accession>
<accession>Q5RC77</accession>
<feature type="chain" id="PRO_0000325837" description="Paraneoplastic antigen-like protein 8A">
    <location>
        <begin position="1"/>
        <end position="439"/>
    </location>
</feature>
<feature type="region of interest" description="Disordered" evidence="1">
    <location>
        <begin position="213"/>
        <end position="439"/>
    </location>
</feature>
<feature type="compositionally biased region" description="Basic residues" evidence="1">
    <location>
        <begin position="231"/>
        <end position="249"/>
    </location>
</feature>
<feature type="compositionally biased region" description="Polar residues" evidence="1">
    <location>
        <begin position="403"/>
        <end position="419"/>
    </location>
</feature>
<feature type="compositionally biased region" description="Basic and acidic residues" evidence="1">
    <location>
        <begin position="423"/>
        <end position="439"/>
    </location>
</feature>
<feature type="sequence conflict" description="In Ref. 1; CAH90630." evidence="2" ref="1">
    <original>E</original>
    <variation>V</variation>
    <location>
        <position position="275"/>
    </location>
</feature>
<feature type="sequence conflict" description="In Ref. 1; CAH90630." evidence="2" ref="1">
    <original>R</original>
    <variation>K</variation>
    <location>
        <position position="422"/>
    </location>
</feature>